<reference key="1">
    <citation type="journal article" date="2005" name="Nature">
        <title>Sequencing of Aspergillus nidulans and comparative analysis with A. fumigatus and A. oryzae.</title>
        <authorList>
            <person name="Galagan J.E."/>
            <person name="Calvo S.E."/>
            <person name="Cuomo C."/>
            <person name="Ma L.-J."/>
            <person name="Wortman J.R."/>
            <person name="Batzoglou S."/>
            <person name="Lee S.-I."/>
            <person name="Bastuerkmen M."/>
            <person name="Spevak C.C."/>
            <person name="Clutterbuck J."/>
            <person name="Kapitonov V."/>
            <person name="Jurka J."/>
            <person name="Scazzocchio C."/>
            <person name="Farman M.L."/>
            <person name="Butler J."/>
            <person name="Purcell S."/>
            <person name="Harris S."/>
            <person name="Braus G.H."/>
            <person name="Draht O."/>
            <person name="Busch S."/>
            <person name="D'Enfert C."/>
            <person name="Bouchier C."/>
            <person name="Goldman G.H."/>
            <person name="Bell-Pedersen D."/>
            <person name="Griffiths-Jones S."/>
            <person name="Doonan J.H."/>
            <person name="Yu J."/>
            <person name="Vienken K."/>
            <person name="Pain A."/>
            <person name="Freitag M."/>
            <person name="Selker E.U."/>
            <person name="Archer D.B."/>
            <person name="Penalva M.A."/>
            <person name="Oakley B.R."/>
            <person name="Momany M."/>
            <person name="Tanaka T."/>
            <person name="Kumagai T."/>
            <person name="Asai K."/>
            <person name="Machida M."/>
            <person name="Nierman W.C."/>
            <person name="Denning D.W."/>
            <person name="Caddick M.X."/>
            <person name="Hynes M."/>
            <person name="Paoletti M."/>
            <person name="Fischer R."/>
            <person name="Miller B.L."/>
            <person name="Dyer P.S."/>
            <person name="Sachs M.S."/>
            <person name="Osmani S.A."/>
            <person name="Birren B.W."/>
        </authorList>
    </citation>
    <scope>NUCLEOTIDE SEQUENCE [LARGE SCALE GENOMIC DNA]</scope>
    <source>
        <strain>FGSC A4 / ATCC 38163 / CBS 112.46 / NRRL 194 / M139</strain>
    </source>
</reference>
<reference key="2">
    <citation type="journal article" date="2009" name="Fungal Genet. Biol.">
        <title>The 2008 update of the Aspergillus nidulans genome annotation: a community effort.</title>
        <authorList>
            <person name="Wortman J.R."/>
            <person name="Gilsenan J.M."/>
            <person name="Joardar V."/>
            <person name="Deegan J."/>
            <person name="Clutterbuck J."/>
            <person name="Andersen M.R."/>
            <person name="Archer D."/>
            <person name="Bencina M."/>
            <person name="Braus G."/>
            <person name="Coutinho P."/>
            <person name="von Dohren H."/>
            <person name="Doonan J."/>
            <person name="Driessen A.J."/>
            <person name="Durek P."/>
            <person name="Espeso E."/>
            <person name="Fekete E."/>
            <person name="Flipphi M."/>
            <person name="Estrada C.G."/>
            <person name="Geysens S."/>
            <person name="Goldman G."/>
            <person name="de Groot P.W."/>
            <person name="Hansen K."/>
            <person name="Harris S.D."/>
            <person name="Heinekamp T."/>
            <person name="Helmstaedt K."/>
            <person name="Henrissat B."/>
            <person name="Hofmann G."/>
            <person name="Homan T."/>
            <person name="Horio T."/>
            <person name="Horiuchi H."/>
            <person name="James S."/>
            <person name="Jones M."/>
            <person name="Karaffa L."/>
            <person name="Karanyi Z."/>
            <person name="Kato M."/>
            <person name="Keller N."/>
            <person name="Kelly D.E."/>
            <person name="Kiel J.A."/>
            <person name="Kim J.M."/>
            <person name="van der Klei I.J."/>
            <person name="Klis F.M."/>
            <person name="Kovalchuk A."/>
            <person name="Krasevec N."/>
            <person name="Kubicek C.P."/>
            <person name="Liu B."/>
            <person name="Maccabe A."/>
            <person name="Meyer V."/>
            <person name="Mirabito P."/>
            <person name="Miskei M."/>
            <person name="Mos M."/>
            <person name="Mullins J."/>
            <person name="Nelson D.R."/>
            <person name="Nielsen J."/>
            <person name="Oakley B.R."/>
            <person name="Osmani S.A."/>
            <person name="Pakula T."/>
            <person name="Paszewski A."/>
            <person name="Paulsen I."/>
            <person name="Pilsyk S."/>
            <person name="Pocsi I."/>
            <person name="Punt P.J."/>
            <person name="Ram A.F."/>
            <person name="Ren Q."/>
            <person name="Robellet X."/>
            <person name="Robson G."/>
            <person name="Seiboth B."/>
            <person name="van Solingen P."/>
            <person name="Specht T."/>
            <person name="Sun J."/>
            <person name="Taheri-Talesh N."/>
            <person name="Takeshita N."/>
            <person name="Ussery D."/>
            <person name="vanKuyk P.A."/>
            <person name="Visser H."/>
            <person name="van de Vondervoort P.J."/>
            <person name="de Vries R.P."/>
            <person name="Walton J."/>
            <person name="Xiang X."/>
            <person name="Xiong Y."/>
            <person name="Zeng A.P."/>
            <person name="Brandt B.W."/>
            <person name="Cornell M.J."/>
            <person name="van den Hondel C.A."/>
            <person name="Visser J."/>
            <person name="Oliver S.G."/>
            <person name="Turner G."/>
        </authorList>
    </citation>
    <scope>GENOME REANNOTATION</scope>
    <source>
        <strain>FGSC A4 / ATCC 38163 / CBS 112.46 / NRRL 194 / M139</strain>
    </source>
</reference>
<gene>
    <name evidence="1" type="primary">rrp3</name>
    <name type="ORF">AN4233</name>
</gene>
<accession>Q5B5E7</accession>
<accession>C8V497</accession>
<name>RRP3_EMENI</name>
<feature type="chain" id="PRO_0000232274" description="ATP-dependent rRNA helicase rrp3">
    <location>
        <begin position="1"/>
        <end position="465"/>
    </location>
</feature>
<feature type="domain" description="Helicase ATP-binding" evidence="2">
    <location>
        <begin position="77"/>
        <end position="248"/>
    </location>
</feature>
<feature type="domain" description="Helicase C-terminal" evidence="3">
    <location>
        <begin position="275"/>
        <end position="419"/>
    </location>
</feature>
<feature type="region of interest" description="Disordered" evidence="4">
    <location>
        <begin position="1"/>
        <end position="46"/>
    </location>
</feature>
<feature type="region of interest" description="Disordered" evidence="4">
    <location>
        <begin position="436"/>
        <end position="465"/>
    </location>
</feature>
<feature type="short sequence motif" description="Q motif" evidence="5">
    <location>
        <begin position="46"/>
        <end position="74"/>
    </location>
</feature>
<feature type="short sequence motif" description="DEAD box" evidence="5">
    <location>
        <begin position="196"/>
        <end position="199"/>
    </location>
</feature>
<feature type="compositionally biased region" description="Polar residues" evidence="4">
    <location>
        <begin position="15"/>
        <end position="29"/>
    </location>
</feature>
<feature type="compositionally biased region" description="Basic residues" evidence="4">
    <location>
        <begin position="445"/>
        <end position="455"/>
    </location>
</feature>
<feature type="binding site" evidence="2">
    <location>
        <begin position="90"/>
        <end position="97"/>
    </location>
    <ligand>
        <name>ATP</name>
        <dbReference type="ChEBI" id="CHEBI:30616"/>
    </ligand>
</feature>
<evidence type="ECO:0000250" key="1">
    <source>
        <dbReference type="UniProtKB" id="P38712"/>
    </source>
</evidence>
<evidence type="ECO:0000255" key="2">
    <source>
        <dbReference type="PROSITE-ProRule" id="PRU00541"/>
    </source>
</evidence>
<evidence type="ECO:0000255" key="3">
    <source>
        <dbReference type="PROSITE-ProRule" id="PRU00542"/>
    </source>
</evidence>
<evidence type="ECO:0000256" key="4">
    <source>
        <dbReference type="SAM" id="MobiDB-lite"/>
    </source>
</evidence>
<evidence type="ECO:0000305" key="5"/>
<comment type="function">
    <text evidence="1">ATP-dependent rRNA helicase required for pre-ribosomal RNA processing. Involved in the maturation of the 35S-pre-rRNA and to its cleavage to mature 18S rRNA.</text>
</comment>
<comment type="catalytic activity">
    <reaction evidence="1">
        <text>ATP + H2O = ADP + phosphate + H(+)</text>
        <dbReference type="Rhea" id="RHEA:13065"/>
        <dbReference type="ChEBI" id="CHEBI:15377"/>
        <dbReference type="ChEBI" id="CHEBI:15378"/>
        <dbReference type="ChEBI" id="CHEBI:30616"/>
        <dbReference type="ChEBI" id="CHEBI:43474"/>
        <dbReference type="ChEBI" id="CHEBI:456216"/>
        <dbReference type="EC" id="3.6.4.13"/>
    </reaction>
</comment>
<comment type="subunit">
    <text evidence="1">Interacts with the SSU processome.</text>
</comment>
<comment type="subcellular location">
    <subcellularLocation>
        <location evidence="5">Nucleus</location>
    </subcellularLocation>
</comment>
<comment type="domain">
    <text evidence="5">The Q motif is unique to and characteristic of the DEAD box family of RNA helicases and controls ATP binding and hydrolysis.</text>
</comment>
<comment type="similarity">
    <text evidence="5">Belongs to the DEAD box helicase family. DDX47/RRP3 subfamily.</text>
</comment>
<dbReference type="EC" id="3.6.4.13" evidence="1"/>
<dbReference type="EMBL" id="AACD01000068">
    <property type="protein sequence ID" value="EAA59332.1"/>
    <property type="molecule type" value="Genomic_DNA"/>
</dbReference>
<dbReference type="EMBL" id="BN001302">
    <property type="protein sequence ID" value="CBF74430.1"/>
    <property type="molecule type" value="Genomic_DNA"/>
</dbReference>
<dbReference type="RefSeq" id="XP_661837.1">
    <property type="nucleotide sequence ID" value="XM_656745.1"/>
</dbReference>
<dbReference type="SMR" id="Q5B5E7"/>
<dbReference type="FunCoup" id="Q5B5E7">
    <property type="interactions" value="1100"/>
</dbReference>
<dbReference type="STRING" id="227321.Q5B5E7"/>
<dbReference type="EnsemblFungi" id="CBF74430">
    <property type="protein sequence ID" value="CBF74430"/>
    <property type="gene ID" value="ANIA_04233"/>
</dbReference>
<dbReference type="KEGG" id="ani:ANIA_04233"/>
<dbReference type="VEuPathDB" id="FungiDB:AN4233"/>
<dbReference type="eggNOG" id="KOG0330">
    <property type="taxonomic scope" value="Eukaryota"/>
</dbReference>
<dbReference type="HOGENOM" id="CLU_003041_1_1_1"/>
<dbReference type="InParanoid" id="Q5B5E7"/>
<dbReference type="OMA" id="GIGIKCC"/>
<dbReference type="OrthoDB" id="10261904at2759"/>
<dbReference type="Proteomes" id="UP000000560">
    <property type="component" value="Chromosome II"/>
</dbReference>
<dbReference type="GO" id="GO:0005634">
    <property type="term" value="C:nucleus"/>
    <property type="evidence" value="ECO:0000318"/>
    <property type="project" value="GO_Central"/>
</dbReference>
<dbReference type="GO" id="GO:0005524">
    <property type="term" value="F:ATP binding"/>
    <property type="evidence" value="ECO:0007669"/>
    <property type="project" value="UniProtKB-KW"/>
</dbReference>
<dbReference type="GO" id="GO:0016887">
    <property type="term" value="F:ATP hydrolysis activity"/>
    <property type="evidence" value="ECO:0007669"/>
    <property type="project" value="RHEA"/>
</dbReference>
<dbReference type="GO" id="GO:0003723">
    <property type="term" value="F:RNA binding"/>
    <property type="evidence" value="ECO:0007669"/>
    <property type="project" value="UniProtKB-KW"/>
</dbReference>
<dbReference type="GO" id="GO:0003724">
    <property type="term" value="F:RNA helicase activity"/>
    <property type="evidence" value="ECO:0007669"/>
    <property type="project" value="UniProtKB-EC"/>
</dbReference>
<dbReference type="GO" id="GO:0006364">
    <property type="term" value="P:rRNA processing"/>
    <property type="evidence" value="ECO:0000318"/>
    <property type="project" value="GO_Central"/>
</dbReference>
<dbReference type="CDD" id="cd17954">
    <property type="entry name" value="DEADc_DDX47"/>
    <property type="match status" value="1"/>
</dbReference>
<dbReference type="CDD" id="cd18787">
    <property type="entry name" value="SF2_C_DEAD"/>
    <property type="match status" value="1"/>
</dbReference>
<dbReference type="Gene3D" id="3.40.50.300">
    <property type="entry name" value="P-loop containing nucleotide triphosphate hydrolases"/>
    <property type="match status" value="2"/>
</dbReference>
<dbReference type="InterPro" id="IPR044765">
    <property type="entry name" value="DDX47/Rrp3_DEADc"/>
</dbReference>
<dbReference type="InterPro" id="IPR011545">
    <property type="entry name" value="DEAD/DEAH_box_helicase_dom"/>
</dbReference>
<dbReference type="InterPro" id="IPR050079">
    <property type="entry name" value="DEAD_box_RNA_helicase"/>
</dbReference>
<dbReference type="InterPro" id="IPR014001">
    <property type="entry name" value="Helicase_ATP-bd"/>
</dbReference>
<dbReference type="InterPro" id="IPR001650">
    <property type="entry name" value="Helicase_C-like"/>
</dbReference>
<dbReference type="InterPro" id="IPR027417">
    <property type="entry name" value="P-loop_NTPase"/>
</dbReference>
<dbReference type="InterPro" id="IPR014014">
    <property type="entry name" value="RNA_helicase_DEAD_Q_motif"/>
</dbReference>
<dbReference type="PANTHER" id="PTHR47959">
    <property type="entry name" value="ATP-DEPENDENT RNA HELICASE RHLE-RELATED"/>
    <property type="match status" value="1"/>
</dbReference>
<dbReference type="PANTHER" id="PTHR47959:SF20">
    <property type="entry name" value="RNA HELICASE"/>
    <property type="match status" value="1"/>
</dbReference>
<dbReference type="Pfam" id="PF00270">
    <property type="entry name" value="DEAD"/>
    <property type="match status" value="1"/>
</dbReference>
<dbReference type="Pfam" id="PF00271">
    <property type="entry name" value="Helicase_C"/>
    <property type="match status" value="1"/>
</dbReference>
<dbReference type="SMART" id="SM00487">
    <property type="entry name" value="DEXDc"/>
    <property type="match status" value="1"/>
</dbReference>
<dbReference type="SMART" id="SM00490">
    <property type="entry name" value="HELICc"/>
    <property type="match status" value="1"/>
</dbReference>
<dbReference type="SUPFAM" id="SSF52540">
    <property type="entry name" value="P-loop containing nucleoside triphosphate hydrolases"/>
    <property type="match status" value="1"/>
</dbReference>
<dbReference type="PROSITE" id="PS51192">
    <property type="entry name" value="HELICASE_ATP_BIND_1"/>
    <property type="match status" value="1"/>
</dbReference>
<dbReference type="PROSITE" id="PS51194">
    <property type="entry name" value="HELICASE_CTER"/>
    <property type="match status" value="1"/>
</dbReference>
<dbReference type="PROSITE" id="PS51195">
    <property type="entry name" value="Q_MOTIF"/>
    <property type="match status" value="1"/>
</dbReference>
<proteinExistence type="inferred from homology"/>
<keyword id="KW-0067">ATP-binding</keyword>
<keyword id="KW-0347">Helicase</keyword>
<keyword id="KW-0378">Hydrolase</keyword>
<keyword id="KW-0547">Nucleotide-binding</keyword>
<keyword id="KW-0539">Nucleus</keyword>
<keyword id="KW-1185">Reference proteome</keyword>
<keyword id="KW-0690">Ribosome biogenesis</keyword>
<keyword id="KW-0694">RNA-binding</keyword>
<keyword id="KW-0698">rRNA processing</keyword>
<organism>
    <name type="scientific">Emericella nidulans (strain FGSC A4 / ATCC 38163 / CBS 112.46 / NRRL 194 / M139)</name>
    <name type="common">Aspergillus nidulans</name>
    <dbReference type="NCBI Taxonomy" id="227321"/>
    <lineage>
        <taxon>Eukaryota</taxon>
        <taxon>Fungi</taxon>
        <taxon>Dikarya</taxon>
        <taxon>Ascomycota</taxon>
        <taxon>Pezizomycotina</taxon>
        <taxon>Eurotiomycetes</taxon>
        <taxon>Eurotiomycetidae</taxon>
        <taxon>Eurotiales</taxon>
        <taxon>Aspergillaceae</taxon>
        <taxon>Aspergillus</taxon>
        <taxon>Aspergillus subgen. Nidulantes</taxon>
    </lineage>
</organism>
<sequence length="465" mass="51094">MSALKKRKITEKQPETNSDSEAESVSSRGSAKDETQTSGEEPAPAKSFKELGIIDQLCEACENMGYKAPTPIQSQAIPLALEGRDVIGLAETGSGKTAAFALPMLQALMEAPQTLFGLVLAPTRELAYQISQAFETLGSTIGVRCAVIVGGMDMVAQSIALGKKPHIIVATPGRLLDHLENTKGFSLRNLKYLAIDEADRLLDMDFGESLDKIIRILPRTRHTYLFSATMSTKVESLQRASLSNPVRVSVSSKYQTVSTLQSSYICIPHKHKNLYLVYLLNEFAGQSAIIFTTTVHETQRVAFMLRALGFGAIPLHGQLSQSARLGALGKFRSRSRDILVATDVAARGLDIPSVDVVFNFDLPMDSKTYIHRVGRTARAGKSGVAISFVTQYDVEVWLRIEHALSKKLPEYQVEKDEVMVMSERVAEASRQATIEMKSFDEKKGARGKKFGKGKRSRDDMDQEEG</sequence>
<protein>
    <recommendedName>
        <fullName evidence="5">ATP-dependent rRNA helicase rrp3</fullName>
        <ecNumber evidence="1">3.6.4.13</ecNumber>
    </recommendedName>
</protein>